<feature type="chain" id="PRO_0000130362" description="Large ribosomal subunit protein uL29">
    <location>
        <begin position="1"/>
        <end position="66"/>
    </location>
</feature>
<evidence type="ECO:0000255" key="1">
    <source>
        <dbReference type="HAMAP-Rule" id="MF_00374"/>
    </source>
</evidence>
<evidence type="ECO:0000305" key="2"/>
<name>RL29_BRUSU</name>
<keyword id="KW-0687">Ribonucleoprotein</keyword>
<keyword id="KW-0689">Ribosomal protein</keyword>
<comment type="similarity">
    <text evidence="1">Belongs to the universal ribosomal protein uL29 family.</text>
</comment>
<reference key="1">
    <citation type="journal article" date="2002" name="Proc. Natl. Acad. Sci. U.S.A.">
        <title>The Brucella suis genome reveals fundamental similarities between animal and plant pathogens and symbionts.</title>
        <authorList>
            <person name="Paulsen I.T."/>
            <person name="Seshadri R."/>
            <person name="Nelson K.E."/>
            <person name="Eisen J.A."/>
            <person name="Heidelberg J.F."/>
            <person name="Read T.D."/>
            <person name="Dodson R.J."/>
            <person name="Umayam L.A."/>
            <person name="Brinkac L.M."/>
            <person name="Beanan M.J."/>
            <person name="Daugherty S.C."/>
            <person name="DeBoy R.T."/>
            <person name="Durkin A.S."/>
            <person name="Kolonay J.F."/>
            <person name="Madupu R."/>
            <person name="Nelson W.C."/>
            <person name="Ayodeji B."/>
            <person name="Kraul M."/>
            <person name="Shetty J."/>
            <person name="Malek J.A."/>
            <person name="Van Aken S.E."/>
            <person name="Riedmuller S."/>
            <person name="Tettelin H."/>
            <person name="Gill S.R."/>
            <person name="White O."/>
            <person name="Salzberg S.L."/>
            <person name="Hoover D.L."/>
            <person name="Lindler L.E."/>
            <person name="Halling S.M."/>
            <person name="Boyle S.M."/>
            <person name="Fraser C.M."/>
        </authorList>
    </citation>
    <scope>NUCLEOTIDE SEQUENCE [LARGE SCALE GENOMIC DNA]</scope>
    <source>
        <strain>1330</strain>
    </source>
</reference>
<reference key="2">
    <citation type="journal article" date="2011" name="J. Bacteriol.">
        <title>Revised genome sequence of Brucella suis 1330.</title>
        <authorList>
            <person name="Tae H."/>
            <person name="Shallom S."/>
            <person name="Settlage R."/>
            <person name="Preston D."/>
            <person name="Adams L.G."/>
            <person name="Garner H.R."/>
        </authorList>
    </citation>
    <scope>NUCLEOTIDE SEQUENCE [LARGE SCALE GENOMIC DNA]</scope>
    <source>
        <strain>1330</strain>
    </source>
</reference>
<sequence length="66" mass="7512">MKAADVRAKSLDQLNDELGTLKKEQFNLRFQKATGQLEKTARVKQVRRDIARIKTIARQKAAESKA</sequence>
<protein>
    <recommendedName>
        <fullName evidence="1">Large ribosomal subunit protein uL29</fullName>
    </recommendedName>
    <alternativeName>
        <fullName evidence="2">50S ribosomal protein L29</fullName>
    </alternativeName>
</protein>
<gene>
    <name evidence="1" type="primary">rpmC</name>
    <name type="ordered locus">BR1225</name>
    <name type="ordered locus">BS1330_I1221</name>
</gene>
<dbReference type="EMBL" id="AE014291">
    <property type="protein sequence ID" value="AAN30144.1"/>
    <property type="molecule type" value="Genomic_DNA"/>
</dbReference>
<dbReference type="EMBL" id="CP002997">
    <property type="protein sequence ID" value="AEM18562.1"/>
    <property type="molecule type" value="Genomic_DNA"/>
</dbReference>
<dbReference type="RefSeq" id="WP_002964354.1">
    <property type="nucleotide sequence ID" value="NZ_KN046804.1"/>
</dbReference>
<dbReference type="SMR" id="P66165"/>
<dbReference type="GeneID" id="97533532"/>
<dbReference type="KEGG" id="bms:BR1225"/>
<dbReference type="KEGG" id="bsi:BS1330_I1221"/>
<dbReference type="PATRIC" id="fig|204722.21.peg.2251"/>
<dbReference type="HOGENOM" id="CLU_158491_1_0_5"/>
<dbReference type="Proteomes" id="UP000007104">
    <property type="component" value="Chromosome I"/>
</dbReference>
<dbReference type="GO" id="GO:0022625">
    <property type="term" value="C:cytosolic large ribosomal subunit"/>
    <property type="evidence" value="ECO:0007669"/>
    <property type="project" value="TreeGrafter"/>
</dbReference>
<dbReference type="GO" id="GO:0003735">
    <property type="term" value="F:structural constituent of ribosome"/>
    <property type="evidence" value="ECO:0007669"/>
    <property type="project" value="InterPro"/>
</dbReference>
<dbReference type="GO" id="GO:0006412">
    <property type="term" value="P:translation"/>
    <property type="evidence" value="ECO:0007669"/>
    <property type="project" value="UniProtKB-UniRule"/>
</dbReference>
<dbReference type="CDD" id="cd00427">
    <property type="entry name" value="Ribosomal_L29_HIP"/>
    <property type="match status" value="1"/>
</dbReference>
<dbReference type="FunFam" id="1.10.287.310:FF:000001">
    <property type="entry name" value="50S ribosomal protein L29"/>
    <property type="match status" value="1"/>
</dbReference>
<dbReference type="Gene3D" id="1.10.287.310">
    <property type="match status" value="1"/>
</dbReference>
<dbReference type="HAMAP" id="MF_00374">
    <property type="entry name" value="Ribosomal_uL29"/>
    <property type="match status" value="1"/>
</dbReference>
<dbReference type="InterPro" id="IPR050063">
    <property type="entry name" value="Ribosomal_protein_uL29"/>
</dbReference>
<dbReference type="InterPro" id="IPR001854">
    <property type="entry name" value="Ribosomal_uL29"/>
</dbReference>
<dbReference type="InterPro" id="IPR018254">
    <property type="entry name" value="Ribosomal_uL29_CS"/>
</dbReference>
<dbReference type="InterPro" id="IPR036049">
    <property type="entry name" value="Ribosomal_uL29_sf"/>
</dbReference>
<dbReference type="NCBIfam" id="TIGR00012">
    <property type="entry name" value="L29"/>
    <property type="match status" value="1"/>
</dbReference>
<dbReference type="PANTHER" id="PTHR10916">
    <property type="entry name" value="60S RIBOSOMAL PROTEIN L35/50S RIBOSOMAL PROTEIN L29"/>
    <property type="match status" value="1"/>
</dbReference>
<dbReference type="PANTHER" id="PTHR10916:SF0">
    <property type="entry name" value="LARGE RIBOSOMAL SUBUNIT PROTEIN UL29C"/>
    <property type="match status" value="1"/>
</dbReference>
<dbReference type="Pfam" id="PF00831">
    <property type="entry name" value="Ribosomal_L29"/>
    <property type="match status" value="1"/>
</dbReference>
<dbReference type="SUPFAM" id="SSF46561">
    <property type="entry name" value="Ribosomal protein L29 (L29p)"/>
    <property type="match status" value="1"/>
</dbReference>
<dbReference type="PROSITE" id="PS00579">
    <property type="entry name" value="RIBOSOMAL_L29"/>
    <property type="match status" value="1"/>
</dbReference>
<accession>P66165</accession>
<accession>G0KAE6</accession>
<accession>Q8YHN2</accession>
<proteinExistence type="inferred from homology"/>
<organism>
    <name type="scientific">Brucella suis biovar 1 (strain 1330)</name>
    <dbReference type="NCBI Taxonomy" id="204722"/>
    <lineage>
        <taxon>Bacteria</taxon>
        <taxon>Pseudomonadati</taxon>
        <taxon>Pseudomonadota</taxon>
        <taxon>Alphaproteobacteria</taxon>
        <taxon>Hyphomicrobiales</taxon>
        <taxon>Brucellaceae</taxon>
        <taxon>Brucella/Ochrobactrum group</taxon>
        <taxon>Brucella</taxon>
    </lineage>
</organism>